<sequence length="73" mass="8293">MKYRLYSEGLSISNDLNSIIGQQSTMDTDIEIDEDDIMELLNILTELGCDVDFDENFSDIADDILESLIEQDV</sequence>
<organism>
    <name type="scientific">Vaccinia virus (strain Copenhagen)</name>
    <name type="common">VACV</name>
    <dbReference type="NCBI Taxonomy" id="10249"/>
    <lineage>
        <taxon>Viruses</taxon>
        <taxon>Varidnaviria</taxon>
        <taxon>Bamfordvirae</taxon>
        <taxon>Nucleocytoviricota</taxon>
        <taxon>Pokkesviricetes</taxon>
        <taxon>Chitovirales</taxon>
        <taxon>Poxviridae</taxon>
        <taxon>Chordopoxvirinae</taxon>
        <taxon>Orthopoxvirus</taxon>
        <taxon>Vaccinia virus</taxon>
    </lineage>
</organism>
<feature type="chain" id="PRO_0000099507" description="Protein OPG058">
    <location>
        <begin position="1"/>
        <end position="73"/>
    </location>
</feature>
<gene>
    <name type="primary">OPG058</name>
    <name type="ORF">F14L</name>
</gene>
<organismHost>
    <name type="scientific">Homo sapiens</name>
    <name type="common">Human</name>
    <dbReference type="NCBI Taxonomy" id="9606"/>
</organismHost>
<reference key="1">
    <citation type="journal article" date="1990" name="Virology">
        <title>The complete DNA sequence of vaccinia virus.</title>
        <authorList>
            <person name="Goebel S.J."/>
            <person name="Johnson G.P."/>
            <person name="Perkus M.E."/>
            <person name="Davis S.W."/>
            <person name="Winslow J.P."/>
            <person name="Paoletti E."/>
        </authorList>
    </citation>
    <scope>NUCLEOTIDE SEQUENCE [LARGE SCALE GENOMIC DNA]</scope>
</reference>
<reference key="2">
    <citation type="journal article" date="1990" name="Virology">
        <title>Appendix to 'The complete DNA sequence of vaccinia virus'.</title>
        <authorList>
            <person name="Goebel S.J."/>
            <person name="Johnson G.P."/>
            <person name="Perkus M.E."/>
            <person name="Davis S.W."/>
            <person name="Winslow J.P."/>
            <person name="Paoletti E."/>
        </authorList>
    </citation>
    <scope>NUCLEOTIDE SEQUENCE [LARGE SCALE GENOMIC DNA]</scope>
</reference>
<accession>P21019</accession>
<evidence type="ECO:0000250" key="1">
    <source>
        <dbReference type="UniProtKB" id="P68707"/>
    </source>
</evidence>
<evidence type="ECO:0000305" key="2"/>
<keyword id="KW-0244">Early protein</keyword>
<keyword id="KW-1185">Reference proteome</keyword>
<proteinExistence type="inferred from homology"/>
<dbReference type="EMBL" id="M35027">
    <property type="protein sequence ID" value="AAA48032.1"/>
    <property type="molecule type" value="Genomic_DNA"/>
</dbReference>
<dbReference type="PIR" id="A42508">
    <property type="entry name" value="A42508"/>
</dbReference>
<dbReference type="SMR" id="P21019"/>
<dbReference type="Proteomes" id="UP000008269">
    <property type="component" value="Segment"/>
</dbReference>
<dbReference type="InterPro" id="IPR009280">
    <property type="entry name" value="Orthopox_F14"/>
</dbReference>
<dbReference type="Pfam" id="PF06076">
    <property type="entry name" value="Orthopox_F14"/>
    <property type="match status" value="1"/>
</dbReference>
<comment type="induction">
    <text evidence="1">Expressed in the early phase of the viral replicative cycle.</text>
</comment>
<comment type="similarity">
    <text evidence="2">Belongs to the orthopoxvirus OPG058 family.</text>
</comment>
<name>PG058_VACCC</name>
<protein>
    <recommendedName>
        <fullName>Protein OPG058</fullName>
    </recommendedName>
    <alternativeName>
        <fullName>Protein F14</fullName>
    </alternativeName>
</protein>